<evidence type="ECO:0000255" key="1">
    <source>
        <dbReference type="HAMAP-Rule" id="MF_00020"/>
    </source>
</evidence>
<protein>
    <recommendedName>
        <fullName evidence="1">Acetate kinase</fullName>
        <ecNumber evidence="1">2.7.2.1</ecNumber>
    </recommendedName>
    <alternativeName>
        <fullName evidence="1">Acetokinase</fullName>
    </alternativeName>
</protein>
<organism>
    <name type="scientific">Methanosarcina mazei</name>
    <name type="common">Methanosarcina frisia</name>
    <dbReference type="NCBI Taxonomy" id="2209"/>
    <lineage>
        <taxon>Archaea</taxon>
        <taxon>Methanobacteriati</taxon>
        <taxon>Methanobacteriota</taxon>
        <taxon>Stenosarchaea group</taxon>
        <taxon>Methanomicrobia</taxon>
        <taxon>Methanosarcinales</taxon>
        <taxon>Methanosarcinaceae</taxon>
        <taxon>Methanosarcina</taxon>
    </lineage>
</organism>
<sequence>MKVLVINAGSSSLKYQLIDMTNESALAIGLCERIGIDNSIITQKRFDGKKLEKQTDLPNHKIALEEVVKALTDSEFGVIKSMDEINAVGHRVVHGGEKFNSSALINEGVEQAIKDCFELAPLHNPPNMMGISSCQEIMPGVPMVAVFDTAFHHTIPPYAYMYALPYELYEKYGIRKYGFHGTSHFYVAKRAAAMLGKPEQDVKVITCHLGNGSSITAVKGGKSIETTMGFTPLEGVAMGTRCGSIDPAVVPFIMEKEGLSTREIDTLMNKKSGVLGVSSLSNDFRDLDEAASKGNQKAELALEIFAYKIKKVIGEYIAVLNGVDAIVFTAGIGENSATIRKRILADLDGIGIKIDEEKNKIRGQEIDISTPDATVRVLVIPTNEELTIARDTKEICETEVKLRSSVPI</sequence>
<proteinExistence type="inferred from homology"/>
<accession>P0CW04</accession>
<accession>Q8PZJ7</accession>
<accession>Q8X269</accession>
<feature type="chain" id="PRO_0000107649" description="Acetate kinase">
    <location>
        <begin position="1"/>
        <end position="408"/>
    </location>
</feature>
<feature type="active site" description="Proton donor/acceptor" evidence="1">
    <location>
        <position position="148"/>
    </location>
</feature>
<feature type="binding site" evidence="1">
    <location>
        <position position="7"/>
    </location>
    <ligand>
        <name>Mg(2+)</name>
        <dbReference type="ChEBI" id="CHEBI:18420"/>
    </ligand>
</feature>
<feature type="binding site" evidence="1">
    <location>
        <position position="14"/>
    </location>
    <ligand>
        <name>ATP</name>
        <dbReference type="ChEBI" id="CHEBI:30616"/>
    </ligand>
</feature>
<feature type="binding site" evidence="1">
    <location>
        <position position="91"/>
    </location>
    <ligand>
        <name>substrate</name>
    </ligand>
</feature>
<feature type="binding site" evidence="1">
    <location>
        <begin position="208"/>
        <end position="212"/>
    </location>
    <ligand>
        <name>ATP</name>
        <dbReference type="ChEBI" id="CHEBI:30616"/>
    </ligand>
</feature>
<feature type="binding site" evidence="1">
    <location>
        <begin position="283"/>
        <end position="285"/>
    </location>
    <ligand>
        <name>ATP</name>
        <dbReference type="ChEBI" id="CHEBI:30616"/>
    </ligand>
</feature>
<feature type="binding site" evidence="1">
    <location>
        <begin position="331"/>
        <end position="335"/>
    </location>
    <ligand>
        <name>ATP</name>
        <dbReference type="ChEBI" id="CHEBI:30616"/>
    </ligand>
</feature>
<feature type="binding site" evidence="1">
    <location>
        <position position="384"/>
    </location>
    <ligand>
        <name>Mg(2+)</name>
        <dbReference type="ChEBI" id="CHEBI:18420"/>
    </ligand>
</feature>
<feature type="site" description="Transition state stabilizer" evidence="1">
    <location>
        <position position="180"/>
    </location>
</feature>
<feature type="site" description="Transition state stabilizer" evidence="1">
    <location>
        <position position="241"/>
    </location>
</feature>
<keyword id="KW-0067">ATP-binding</keyword>
<keyword id="KW-0963">Cytoplasm</keyword>
<keyword id="KW-0418">Kinase</keyword>
<keyword id="KW-0460">Magnesium</keyword>
<keyword id="KW-0479">Metal-binding</keyword>
<keyword id="KW-0547">Nucleotide-binding</keyword>
<keyword id="KW-0808">Transferase</keyword>
<reference key="1">
    <citation type="submission" date="2001-09" db="EMBL/GenBank/DDBJ databases">
        <title>Acetate kinase encoding (ack) gene of Methanosarcina mazei 2-P strain isolated from a Japanese paddy field soil.</title>
        <authorList>
            <person name="Tonouti A."/>
            <person name="Tohyama H."/>
            <person name="Nishizaki Y."/>
        </authorList>
    </citation>
    <scope>NUCLEOTIDE SEQUENCE [GENOMIC DNA]</scope>
    <source>
        <strain>2-P</strain>
    </source>
</reference>
<name>ACKA_METMZ</name>
<gene>
    <name evidence="1" type="primary">ackA</name>
    <name type="synonym">ack</name>
</gene>
<dbReference type="EC" id="2.7.2.1" evidence="1"/>
<dbReference type="EMBL" id="AB071281">
    <property type="protein sequence ID" value="BAB71961.2"/>
    <property type="molecule type" value="Genomic_DNA"/>
</dbReference>
<dbReference type="SMR" id="P0CW04"/>
<dbReference type="BRENDA" id="2.7.2.1">
    <property type="organism ID" value="3270"/>
</dbReference>
<dbReference type="UniPathway" id="UPA00340">
    <property type="reaction ID" value="UER00458"/>
</dbReference>
<dbReference type="GO" id="GO:0005737">
    <property type="term" value="C:cytoplasm"/>
    <property type="evidence" value="ECO:0007669"/>
    <property type="project" value="UniProtKB-SubCell"/>
</dbReference>
<dbReference type="GO" id="GO:0008776">
    <property type="term" value="F:acetate kinase activity"/>
    <property type="evidence" value="ECO:0007669"/>
    <property type="project" value="UniProtKB-UniRule"/>
</dbReference>
<dbReference type="GO" id="GO:0005524">
    <property type="term" value="F:ATP binding"/>
    <property type="evidence" value="ECO:0007669"/>
    <property type="project" value="UniProtKB-KW"/>
</dbReference>
<dbReference type="GO" id="GO:0000287">
    <property type="term" value="F:magnesium ion binding"/>
    <property type="evidence" value="ECO:0007669"/>
    <property type="project" value="UniProtKB-UniRule"/>
</dbReference>
<dbReference type="GO" id="GO:0006083">
    <property type="term" value="P:acetate metabolic process"/>
    <property type="evidence" value="ECO:0007669"/>
    <property type="project" value="TreeGrafter"/>
</dbReference>
<dbReference type="GO" id="GO:0006085">
    <property type="term" value="P:acetyl-CoA biosynthetic process"/>
    <property type="evidence" value="ECO:0007669"/>
    <property type="project" value="UniProtKB-UniRule"/>
</dbReference>
<dbReference type="CDD" id="cd24010">
    <property type="entry name" value="ASKHA_NBD_AcK_PK"/>
    <property type="match status" value="1"/>
</dbReference>
<dbReference type="Gene3D" id="3.30.420.40">
    <property type="match status" value="2"/>
</dbReference>
<dbReference type="HAMAP" id="MF_00020">
    <property type="entry name" value="Acetate_kinase"/>
    <property type="match status" value="1"/>
</dbReference>
<dbReference type="InterPro" id="IPR004372">
    <property type="entry name" value="Ac/propionate_kinase"/>
</dbReference>
<dbReference type="InterPro" id="IPR000890">
    <property type="entry name" value="Aliphatic_acid_kin_short-chain"/>
</dbReference>
<dbReference type="InterPro" id="IPR023865">
    <property type="entry name" value="Aliphatic_acid_kinase_CS"/>
</dbReference>
<dbReference type="InterPro" id="IPR043129">
    <property type="entry name" value="ATPase_NBD"/>
</dbReference>
<dbReference type="NCBIfam" id="TIGR00016">
    <property type="entry name" value="ackA"/>
    <property type="match status" value="1"/>
</dbReference>
<dbReference type="PANTHER" id="PTHR21060">
    <property type="entry name" value="ACETATE KINASE"/>
    <property type="match status" value="1"/>
</dbReference>
<dbReference type="PANTHER" id="PTHR21060:SF15">
    <property type="entry name" value="ACETATE KINASE-RELATED"/>
    <property type="match status" value="1"/>
</dbReference>
<dbReference type="Pfam" id="PF00871">
    <property type="entry name" value="Acetate_kinase"/>
    <property type="match status" value="1"/>
</dbReference>
<dbReference type="PIRSF" id="PIRSF000722">
    <property type="entry name" value="Acetate_prop_kin"/>
    <property type="match status" value="1"/>
</dbReference>
<dbReference type="PRINTS" id="PR00471">
    <property type="entry name" value="ACETATEKNASE"/>
</dbReference>
<dbReference type="SUPFAM" id="SSF53067">
    <property type="entry name" value="Actin-like ATPase domain"/>
    <property type="match status" value="2"/>
</dbReference>
<dbReference type="PROSITE" id="PS01075">
    <property type="entry name" value="ACETATE_KINASE_1"/>
    <property type="match status" value="1"/>
</dbReference>
<dbReference type="PROSITE" id="PS01076">
    <property type="entry name" value="ACETATE_KINASE_2"/>
    <property type="match status" value="1"/>
</dbReference>
<comment type="function">
    <text evidence="1">Catalyzes the formation of acetyl phosphate from acetate and ATP. Can also catalyze the reverse reaction.</text>
</comment>
<comment type="catalytic activity">
    <reaction evidence="1">
        <text>acetate + ATP = acetyl phosphate + ADP</text>
        <dbReference type="Rhea" id="RHEA:11352"/>
        <dbReference type="ChEBI" id="CHEBI:22191"/>
        <dbReference type="ChEBI" id="CHEBI:30089"/>
        <dbReference type="ChEBI" id="CHEBI:30616"/>
        <dbReference type="ChEBI" id="CHEBI:456216"/>
        <dbReference type="EC" id="2.7.2.1"/>
    </reaction>
</comment>
<comment type="cofactor">
    <cofactor evidence="1">
        <name>Mg(2+)</name>
        <dbReference type="ChEBI" id="CHEBI:18420"/>
    </cofactor>
    <cofactor evidence="1">
        <name>Mn(2+)</name>
        <dbReference type="ChEBI" id="CHEBI:29035"/>
    </cofactor>
    <text evidence="1">Mg(2+). Can also accept Mn(2+).</text>
</comment>
<comment type="pathway">
    <text evidence="1">Metabolic intermediate biosynthesis; acetyl-CoA biosynthesis; acetyl-CoA from acetate: step 1/2.</text>
</comment>
<comment type="subunit">
    <text evidence="1">Homodimer.</text>
</comment>
<comment type="subcellular location">
    <subcellularLocation>
        <location evidence="1">Cytoplasm</location>
    </subcellularLocation>
</comment>
<comment type="similarity">
    <text evidence="1">Belongs to the acetokinase family.</text>
</comment>